<evidence type="ECO:0000255" key="1">
    <source>
        <dbReference type="HAMAP-Rule" id="MF_00821"/>
    </source>
</evidence>
<organism>
    <name type="scientific">Brucella abortus biovar 1 (strain 9-941)</name>
    <dbReference type="NCBI Taxonomy" id="262698"/>
    <lineage>
        <taxon>Bacteria</taxon>
        <taxon>Pseudomonadati</taxon>
        <taxon>Pseudomonadota</taxon>
        <taxon>Alphaproteobacteria</taxon>
        <taxon>Hyphomicrobiales</taxon>
        <taxon>Brucellaceae</taxon>
        <taxon>Brucella/Ochrobactrum group</taxon>
        <taxon>Brucella</taxon>
    </lineage>
</organism>
<protein>
    <recommendedName>
        <fullName evidence="1">Protein-export protein SecB</fullName>
    </recommendedName>
</protein>
<dbReference type="EMBL" id="AE017223">
    <property type="protein sequence ID" value="AAX75348.1"/>
    <property type="molecule type" value="Genomic_DNA"/>
</dbReference>
<dbReference type="RefSeq" id="WP_002965136.1">
    <property type="nucleotide sequence ID" value="NC_006932.1"/>
</dbReference>
<dbReference type="SMR" id="P0C125"/>
<dbReference type="EnsemblBacteria" id="AAX75348">
    <property type="protein sequence ID" value="AAX75348"/>
    <property type="gene ID" value="BruAb1_2047"/>
</dbReference>
<dbReference type="GeneID" id="97534666"/>
<dbReference type="KEGG" id="bmb:BruAb1_2047"/>
<dbReference type="HOGENOM" id="CLU_111574_0_0_5"/>
<dbReference type="Proteomes" id="UP000000540">
    <property type="component" value="Chromosome I"/>
</dbReference>
<dbReference type="GO" id="GO:0005737">
    <property type="term" value="C:cytoplasm"/>
    <property type="evidence" value="ECO:0007669"/>
    <property type="project" value="UniProtKB-SubCell"/>
</dbReference>
<dbReference type="GO" id="GO:0051082">
    <property type="term" value="F:unfolded protein binding"/>
    <property type="evidence" value="ECO:0007669"/>
    <property type="project" value="InterPro"/>
</dbReference>
<dbReference type="GO" id="GO:0006457">
    <property type="term" value="P:protein folding"/>
    <property type="evidence" value="ECO:0007669"/>
    <property type="project" value="UniProtKB-UniRule"/>
</dbReference>
<dbReference type="GO" id="GO:0051262">
    <property type="term" value="P:protein tetramerization"/>
    <property type="evidence" value="ECO:0007669"/>
    <property type="project" value="InterPro"/>
</dbReference>
<dbReference type="GO" id="GO:0015031">
    <property type="term" value="P:protein transport"/>
    <property type="evidence" value="ECO:0007669"/>
    <property type="project" value="UniProtKB-UniRule"/>
</dbReference>
<dbReference type="Gene3D" id="3.10.420.10">
    <property type="entry name" value="SecB-like"/>
    <property type="match status" value="1"/>
</dbReference>
<dbReference type="HAMAP" id="MF_00821">
    <property type="entry name" value="SecB"/>
    <property type="match status" value="1"/>
</dbReference>
<dbReference type="InterPro" id="IPR003708">
    <property type="entry name" value="SecB"/>
</dbReference>
<dbReference type="InterPro" id="IPR035958">
    <property type="entry name" value="SecB-like_sf"/>
</dbReference>
<dbReference type="NCBIfam" id="NF004392">
    <property type="entry name" value="PRK05751.1-3"/>
    <property type="match status" value="1"/>
</dbReference>
<dbReference type="NCBIfam" id="TIGR00809">
    <property type="entry name" value="secB"/>
    <property type="match status" value="1"/>
</dbReference>
<dbReference type="PANTHER" id="PTHR36918">
    <property type="match status" value="1"/>
</dbReference>
<dbReference type="PANTHER" id="PTHR36918:SF1">
    <property type="entry name" value="PROTEIN-EXPORT PROTEIN SECB"/>
    <property type="match status" value="1"/>
</dbReference>
<dbReference type="Pfam" id="PF02556">
    <property type="entry name" value="SecB"/>
    <property type="match status" value="1"/>
</dbReference>
<dbReference type="PRINTS" id="PR01594">
    <property type="entry name" value="SECBCHAPRONE"/>
</dbReference>
<dbReference type="SUPFAM" id="SSF54611">
    <property type="entry name" value="SecB-like"/>
    <property type="match status" value="1"/>
</dbReference>
<proteinExistence type="inferred from homology"/>
<sequence length="163" mass="17878">MSDKAAGETKNGNGATTEPSLNILAQYVKDLSFESPGAPLSLRPREKAPSININVNVNANPLSETDFDVVLTLEAKAVDGKDILFNTELVYGGVFRIQGIPQEHMLPLLFIECPRLLFPFARQIIADATRNGGYPPLMIDPIDFAQMFQQRMAEEQAKSAVKS</sequence>
<gene>
    <name evidence="1" type="primary">secB</name>
    <name type="ordered locus">BruAb1_2047</name>
</gene>
<reference key="1">
    <citation type="journal article" date="2005" name="J. Bacteriol.">
        <title>Completion of the genome sequence of Brucella abortus and comparison to the highly similar genomes of Brucella melitensis and Brucella suis.</title>
        <authorList>
            <person name="Halling S.M."/>
            <person name="Peterson-Burch B.D."/>
            <person name="Bricker B.J."/>
            <person name="Zuerner R.L."/>
            <person name="Qing Z."/>
            <person name="Li L.-L."/>
            <person name="Kapur V."/>
            <person name="Alt D.P."/>
            <person name="Olsen S.C."/>
        </authorList>
    </citation>
    <scope>NUCLEOTIDE SEQUENCE [LARGE SCALE GENOMIC DNA]</scope>
    <source>
        <strain>9-941</strain>
    </source>
</reference>
<keyword id="KW-0143">Chaperone</keyword>
<keyword id="KW-0963">Cytoplasm</keyword>
<keyword id="KW-0653">Protein transport</keyword>
<keyword id="KW-0811">Translocation</keyword>
<keyword id="KW-0813">Transport</keyword>
<accession>P0C125</accession>
<accession>Q57AI6</accession>
<name>SECB_BRUAB</name>
<feature type="chain" id="PRO_0000055352" description="Protein-export protein SecB">
    <location>
        <begin position="1"/>
        <end position="163"/>
    </location>
</feature>
<comment type="function">
    <text evidence="1">One of the proteins required for the normal export of preproteins out of the cell cytoplasm. It is a molecular chaperone that binds to a subset of precursor proteins, maintaining them in a translocation-competent state. It also specifically binds to its receptor SecA.</text>
</comment>
<comment type="subunit">
    <text evidence="1">Homotetramer, a dimer of dimers. One homotetramer interacts with 1 SecA dimer.</text>
</comment>
<comment type="subcellular location">
    <subcellularLocation>
        <location evidence="1">Cytoplasm</location>
    </subcellularLocation>
</comment>
<comment type="similarity">
    <text evidence="1">Belongs to the SecB family.</text>
</comment>